<comment type="function">
    <text evidence="1">Catalyzes the formation of the alpha-1,6-glucosidic linkages in glycogen by scission of a 1,4-alpha-linked oligosaccharide from growing alpha-1,4-glucan chains and the subsequent attachment of the oligosaccharide to the alpha-1,6 position.</text>
</comment>
<comment type="catalytic activity">
    <reaction evidence="1">
        <text>Transfers a segment of a (1-&gt;4)-alpha-D-glucan chain to a primary hydroxy group in a similar glucan chain.</text>
        <dbReference type="EC" id="2.4.1.18"/>
    </reaction>
</comment>
<comment type="pathway">
    <text evidence="1">Glycan biosynthesis; glycogen biosynthesis.</text>
</comment>
<comment type="subunit">
    <text evidence="1">Monomer.</text>
</comment>
<comment type="similarity">
    <text evidence="1">Belongs to the glycosyl hydrolase 13 family. GlgB subfamily.</text>
</comment>
<gene>
    <name evidence="1" type="primary">glgB</name>
    <name type="ordered locus">RD1_2875</name>
</gene>
<protein>
    <recommendedName>
        <fullName evidence="1">1,4-alpha-glucan branching enzyme GlgB</fullName>
        <ecNumber evidence="1">2.4.1.18</ecNumber>
    </recommendedName>
    <alternativeName>
        <fullName evidence="1">1,4-alpha-D-glucan:1,4-alpha-D-glucan 6-glucosyl-transferase</fullName>
    </alternativeName>
    <alternativeName>
        <fullName evidence="1">Alpha-(1-&gt;4)-glucan branching enzyme</fullName>
    </alternativeName>
    <alternativeName>
        <fullName evidence="1">Glycogen branching enzyme</fullName>
        <shortName evidence="1">BE</shortName>
    </alternativeName>
</protein>
<evidence type="ECO:0000255" key="1">
    <source>
        <dbReference type="HAMAP-Rule" id="MF_00685"/>
    </source>
</evidence>
<organism>
    <name type="scientific">Roseobacter denitrificans (strain ATCC 33942 / OCh 114)</name>
    <name type="common">Erythrobacter sp. (strain OCh 114)</name>
    <name type="synonym">Roseobacter denitrificans</name>
    <dbReference type="NCBI Taxonomy" id="375451"/>
    <lineage>
        <taxon>Bacteria</taxon>
        <taxon>Pseudomonadati</taxon>
        <taxon>Pseudomonadota</taxon>
        <taxon>Alphaproteobacteria</taxon>
        <taxon>Rhodobacterales</taxon>
        <taxon>Roseobacteraceae</taxon>
        <taxon>Roseobacter</taxon>
    </lineage>
</organism>
<name>GLGB_ROSDO</name>
<keyword id="KW-0119">Carbohydrate metabolism</keyword>
<keyword id="KW-0320">Glycogen biosynthesis</keyword>
<keyword id="KW-0321">Glycogen metabolism</keyword>
<keyword id="KW-0328">Glycosyltransferase</keyword>
<keyword id="KW-1185">Reference proteome</keyword>
<keyword id="KW-0808">Transferase</keyword>
<accession>Q165E2</accession>
<reference key="1">
    <citation type="journal article" date="2007" name="J. Bacteriol.">
        <title>The complete genome sequence of Roseobacter denitrificans reveals a mixotrophic rather than photosynthetic metabolism.</title>
        <authorList>
            <person name="Swingley W.D."/>
            <person name="Sadekar S."/>
            <person name="Mastrian S.D."/>
            <person name="Matthies H.J."/>
            <person name="Hao J."/>
            <person name="Ramos H."/>
            <person name="Acharya C.R."/>
            <person name="Conrad A.L."/>
            <person name="Taylor H.L."/>
            <person name="Dejesa L.C."/>
            <person name="Shah M.K."/>
            <person name="O'Huallachain M.E."/>
            <person name="Lince M.T."/>
            <person name="Blankenship R.E."/>
            <person name="Beatty J.T."/>
            <person name="Touchman J.W."/>
        </authorList>
    </citation>
    <scope>NUCLEOTIDE SEQUENCE [LARGE SCALE GENOMIC DNA]</scope>
    <source>
        <strain>ATCC 33942 / OCh 114</strain>
    </source>
</reference>
<dbReference type="EC" id="2.4.1.18" evidence="1"/>
<dbReference type="EMBL" id="CP000362">
    <property type="protein sequence ID" value="ABG32401.1"/>
    <property type="molecule type" value="Genomic_DNA"/>
</dbReference>
<dbReference type="RefSeq" id="WP_011569017.1">
    <property type="nucleotide sequence ID" value="NC_008209.1"/>
</dbReference>
<dbReference type="SMR" id="Q165E2"/>
<dbReference type="STRING" id="375451.RD1_2875"/>
<dbReference type="CAZy" id="CBM48">
    <property type="family name" value="Carbohydrate-Binding Module Family 48"/>
</dbReference>
<dbReference type="CAZy" id="GH13">
    <property type="family name" value="Glycoside Hydrolase Family 13"/>
</dbReference>
<dbReference type="KEGG" id="rde:RD1_2875"/>
<dbReference type="eggNOG" id="COG0296">
    <property type="taxonomic scope" value="Bacteria"/>
</dbReference>
<dbReference type="HOGENOM" id="CLU_004245_3_2_5"/>
<dbReference type="OrthoDB" id="9800174at2"/>
<dbReference type="UniPathway" id="UPA00164"/>
<dbReference type="Proteomes" id="UP000007029">
    <property type="component" value="Chromosome"/>
</dbReference>
<dbReference type="GO" id="GO:0005829">
    <property type="term" value="C:cytosol"/>
    <property type="evidence" value="ECO:0007669"/>
    <property type="project" value="TreeGrafter"/>
</dbReference>
<dbReference type="GO" id="GO:0003844">
    <property type="term" value="F:1,4-alpha-glucan branching enzyme activity"/>
    <property type="evidence" value="ECO:0007669"/>
    <property type="project" value="UniProtKB-UniRule"/>
</dbReference>
<dbReference type="GO" id="GO:0043169">
    <property type="term" value="F:cation binding"/>
    <property type="evidence" value="ECO:0007669"/>
    <property type="project" value="InterPro"/>
</dbReference>
<dbReference type="GO" id="GO:0004553">
    <property type="term" value="F:hydrolase activity, hydrolyzing O-glycosyl compounds"/>
    <property type="evidence" value="ECO:0007669"/>
    <property type="project" value="InterPro"/>
</dbReference>
<dbReference type="GO" id="GO:0005978">
    <property type="term" value="P:glycogen biosynthetic process"/>
    <property type="evidence" value="ECO:0007669"/>
    <property type="project" value="UniProtKB-UniRule"/>
</dbReference>
<dbReference type="CDD" id="cd11322">
    <property type="entry name" value="AmyAc_Glg_BE"/>
    <property type="match status" value="1"/>
</dbReference>
<dbReference type="CDD" id="cd02855">
    <property type="entry name" value="E_set_GBE_prok_N"/>
    <property type="match status" value="1"/>
</dbReference>
<dbReference type="FunFam" id="2.60.40.10:FF:000169">
    <property type="entry name" value="1,4-alpha-glucan branching enzyme GlgB"/>
    <property type="match status" value="1"/>
</dbReference>
<dbReference type="FunFam" id="2.60.40.1180:FF:000002">
    <property type="entry name" value="1,4-alpha-glucan branching enzyme GlgB"/>
    <property type="match status" value="1"/>
</dbReference>
<dbReference type="FunFam" id="3.20.20.80:FF:000003">
    <property type="entry name" value="1,4-alpha-glucan branching enzyme GlgB"/>
    <property type="match status" value="1"/>
</dbReference>
<dbReference type="Gene3D" id="3.20.20.80">
    <property type="entry name" value="Glycosidases"/>
    <property type="match status" value="1"/>
</dbReference>
<dbReference type="Gene3D" id="2.60.40.1180">
    <property type="entry name" value="Golgi alpha-mannosidase II"/>
    <property type="match status" value="1"/>
</dbReference>
<dbReference type="Gene3D" id="2.60.40.10">
    <property type="entry name" value="Immunoglobulins"/>
    <property type="match status" value="1"/>
</dbReference>
<dbReference type="HAMAP" id="MF_00685">
    <property type="entry name" value="GlgB"/>
    <property type="match status" value="1"/>
</dbReference>
<dbReference type="InterPro" id="IPR006048">
    <property type="entry name" value="A-amylase/branching_C"/>
</dbReference>
<dbReference type="InterPro" id="IPR037439">
    <property type="entry name" value="Branching_enzy"/>
</dbReference>
<dbReference type="InterPro" id="IPR006407">
    <property type="entry name" value="GlgB"/>
</dbReference>
<dbReference type="InterPro" id="IPR054169">
    <property type="entry name" value="GlgB_N"/>
</dbReference>
<dbReference type="InterPro" id="IPR044143">
    <property type="entry name" value="GlgB_N_E_set_prok"/>
</dbReference>
<dbReference type="InterPro" id="IPR006047">
    <property type="entry name" value="Glyco_hydro_13_cat_dom"/>
</dbReference>
<dbReference type="InterPro" id="IPR004193">
    <property type="entry name" value="Glyco_hydro_13_N"/>
</dbReference>
<dbReference type="InterPro" id="IPR013780">
    <property type="entry name" value="Glyco_hydro_b"/>
</dbReference>
<dbReference type="InterPro" id="IPR017853">
    <property type="entry name" value="Glycoside_hydrolase_SF"/>
</dbReference>
<dbReference type="InterPro" id="IPR013783">
    <property type="entry name" value="Ig-like_fold"/>
</dbReference>
<dbReference type="InterPro" id="IPR014756">
    <property type="entry name" value="Ig_E-set"/>
</dbReference>
<dbReference type="NCBIfam" id="TIGR01515">
    <property type="entry name" value="branching_enzym"/>
    <property type="match status" value="1"/>
</dbReference>
<dbReference type="NCBIfam" id="NF003811">
    <property type="entry name" value="PRK05402.1"/>
    <property type="match status" value="1"/>
</dbReference>
<dbReference type="NCBIfam" id="NF008967">
    <property type="entry name" value="PRK12313.1"/>
    <property type="match status" value="1"/>
</dbReference>
<dbReference type="PANTHER" id="PTHR43651">
    <property type="entry name" value="1,4-ALPHA-GLUCAN-BRANCHING ENZYME"/>
    <property type="match status" value="1"/>
</dbReference>
<dbReference type="PANTHER" id="PTHR43651:SF3">
    <property type="entry name" value="1,4-ALPHA-GLUCAN-BRANCHING ENZYME"/>
    <property type="match status" value="1"/>
</dbReference>
<dbReference type="Pfam" id="PF00128">
    <property type="entry name" value="Alpha-amylase"/>
    <property type="match status" value="2"/>
</dbReference>
<dbReference type="Pfam" id="PF02806">
    <property type="entry name" value="Alpha-amylase_C"/>
    <property type="match status" value="1"/>
</dbReference>
<dbReference type="Pfam" id="PF02922">
    <property type="entry name" value="CBM_48"/>
    <property type="match status" value="1"/>
</dbReference>
<dbReference type="Pfam" id="PF22019">
    <property type="entry name" value="GlgB_N"/>
    <property type="match status" value="1"/>
</dbReference>
<dbReference type="PIRSF" id="PIRSF000463">
    <property type="entry name" value="GlgB"/>
    <property type="match status" value="1"/>
</dbReference>
<dbReference type="SMART" id="SM00642">
    <property type="entry name" value="Aamy"/>
    <property type="match status" value="1"/>
</dbReference>
<dbReference type="SUPFAM" id="SSF51445">
    <property type="entry name" value="(Trans)glycosidases"/>
    <property type="match status" value="1"/>
</dbReference>
<dbReference type="SUPFAM" id="SSF81296">
    <property type="entry name" value="E set domains"/>
    <property type="match status" value="2"/>
</dbReference>
<dbReference type="SUPFAM" id="SSF51011">
    <property type="entry name" value="Glycosyl hydrolase domain"/>
    <property type="match status" value="1"/>
</dbReference>
<feature type="chain" id="PRO_0000260693" description="1,4-alpha-glucan branching enzyme GlgB">
    <location>
        <begin position="1"/>
        <end position="731"/>
    </location>
</feature>
<feature type="active site" description="Nucleophile" evidence="1">
    <location>
        <position position="409"/>
    </location>
</feature>
<feature type="active site" description="Proton donor" evidence="1">
    <location>
        <position position="462"/>
    </location>
</feature>
<proteinExistence type="inferred from homology"/>
<sequence length="731" mass="81701">MNISQTDAEKLAAGCHGNPFSVLGLHEVAGKLSLRVFLPGAETVEALDPKTGRVIVTLNQTETPGLFEGTAARRKKRFAYHLRITQGAHQWQMDDPYRFGPVIGDIDEYLLGEGSHRRLWSVLGAHVITHEGVAGTHFAVWAPNAQRVSVVGEFNVWDGRRMMMRQRGATGVWEIFVPGIGEGEIYKYEIIAPDGSLLPQKADPVGFGAEHPPRTGSVVRKIDGYAWDDAQWMTRRADVQRIDQPVSIYEVHLGSWRRVPEDGNRPLSYVELADQLVAYVKDMGFTHMEVMPVSEFPFDGSWGYQPIGLFAPTIRHGTLDEFRALVAACHRENIGVILDWVPGHFPEDAHGLGRFDGTALYEHADRKEGFHPDWNTLVYNYGRAEVANYLAANALYWLQEHHVDGLRVDAVASMLYRDYSRKDGEWIPNRDGGRENYEAISFLQKVNTESYGEVPGIMTIAEESTAFPGVSAPVDAGGLGFGFKWNMGWMNDTLQYMQQDPIHRKYHHHEMTFGLHYAFSENFILPLSHDEVVHGKGSLLDKMPGQGDDKFANLRAYYGFMWGHPGKKLLFMGCEFAQGVEWNHDSSLDWHLLDHPQHRGMQNLVRDLNALYRENAALHGLDCAAQGFEWIDENNAEASVLAWLRHGPDGGAPMLVVSNFTPVERSHYRLGVPQAGRWVERLNTNADCYGGTGLGNLGGVQSADIAAAGRPFSIDVVLPPLTTLFFQLDDG</sequence>